<gene>
    <name type="ordered locus">MT0906</name>
</gene>
<proteinExistence type="predicted"/>
<keyword id="KW-1185">Reference proteome</keyword>
<protein>
    <recommendedName>
        <fullName>Uncharacterized protein MT0906</fullName>
    </recommendedName>
</protein>
<feature type="chain" id="PRO_0000427612" description="Uncharacterized protein MT0906">
    <location>
        <begin position="1"/>
        <end position="253"/>
    </location>
</feature>
<feature type="region of interest" description="Disordered" evidence="1">
    <location>
        <begin position="211"/>
        <end position="235"/>
    </location>
</feature>
<feature type="compositionally biased region" description="Polar residues" evidence="1">
    <location>
        <begin position="218"/>
        <end position="229"/>
    </location>
</feature>
<sequence length="253" mass="27373">MRELKVVGLDADGKNIICQGAIPSEQFKLPVDDRLRAALRDDSVQPEQAQLDIEVTNVLSPKEIQARIRAGASVEQVAAASGSDIARIRRFAHPVLLERSRAAELATAAHPVLADGPAVLTMQETVAAALVARGLNPDSLTWDAWRNEDSRWTVQLAWKAGRSDNLAHFRFTPGAHGGTATAIDDTAHELINPTFNRPLRPLAPVAHLDFDEPEPAQPTLTVPSAQPVSNRRGKPAIPAWEDVLLGVRSGGRR</sequence>
<reference key="1">
    <citation type="journal article" date="2002" name="J. Bacteriol.">
        <title>Whole-genome comparison of Mycobacterium tuberculosis clinical and laboratory strains.</title>
        <authorList>
            <person name="Fleischmann R.D."/>
            <person name="Alland D."/>
            <person name="Eisen J.A."/>
            <person name="Carpenter L."/>
            <person name="White O."/>
            <person name="Peterson J.D."/>
            <person name="DeBoy R.T."/>
            <person name="Dodson R.J."/>
            <person name="Gwinn M.L."/>
            <person name="Haft D.H."/>
            <person name="Hickey E.K."/>
            <person name="Kolonay J.F."/>
            <person name="Nelson W.C."/>
            <person name="Umayam L.A."/>
            <person name="Ermolaeva M.D."/>
            <person name="Salzberg S.L."/>
            <person name="Delcher A."/>
            <person name="Utterback T.R."/>
            <person name="Weidman J.F."/>
            <person name="Khouri H.M."/>
            <person name="Gill J."/>
            <person name="Mikula A."/>
            <person name="Bishai W."/>
            <person name="Jacobs W.R. Jr."/>
            <person name="Venter J.C."/>
            <person name="Fraser C.M."/>
        </authorList>
    </citation>
    <scope>NUCLEOTIDE SEQUENCE [LARGE SCALE GENOMIC DNA]</scope>
    <source>
        <strain>CDC 1551 / Oshkosh</strain>
    </source>
</reference>
<organism>
    <name type="scientific">Mycobacterium tuberculosis (strain CDC 1551 / Oshkosh)</name>
    <dbReference type="NCBI Taxonomy" id="83331"/>
    <lineage>
        <taxon>Bacteria</taxon>
        <taxon>Bacillati</taxon>
        <taxon>Actinomycetota</taxon>
        <taxon>Actinomycetes</taxon>
        <taxon>Mycobacteriales</taxon>
        <taxon>Mycobacteriaceae</taxon>
        <taxon>Mycobacterium</taxon>
        <taxon>Mycobacterium tuberculosis complex</taxon>
    </lineage>
</organism>
<accession>P9WKQ6</accession>
<accession>L0T568</accession>
<accession>P64739</accession>
<accession>Q10545</accession>
<evidence type="ECO:0000256" key="1">
    <source>
        <dbReference type="SAM" id="MobiDB-lite"/>
    </source>
</evidence>
<dbReference type="EMBL" id="AE000516">
    <property type="protein sequence ID" value="AAK45148.1"/>
    <property type="molecule type" value="Genomic_DNA"/>
</dbReference>
<dbReference type="PIR" id="H70780">
    <property type="entry name" value="H70780"/>
</dbReference>
<dbReference type="SMR" id="P9WKQ6"/>
<dbReference type="KEGG" id="mtc:MT0906"/>
<dbReference type="PATRIC" id="fig|83331.31.peg.973"/>
<dbReference type="HOGENOM" id="CLU_021151_1_0_11"/>
<dbReference type="Proteomes" id="UP000001020">
    <property type="component" value="Chromosome"/>
</dbReference>
<dbReference type="InterPro" id="IPR021421">
    <property type="entry name" value="DUF3071"/>
</dbReference>
<dbReference type="InterPro" id="IPR047682">
    <property type="entry name" value="SepH-like"/>
</dbReference>
<dbReference type="NCBIfam" id="NF040712">
    <property type="entry name" value="SepH"/>
    <property type="match status" value="1"/>
</dbReference>
<dbReference type="Pfam" id="PF11268">
    <property type="entry name" value="DUF3071"/>
    <property type="match status" value="1"/>
</dbReference>
<name>Y883_MYCTO</name>